<reference key="1">
    <citation type="journal article" date="1990" name="Proc. Natl. Acad. Sci. U.S.A.">
        <title>Nucleotide sequence and expression of a deep-sea ribulose-1,5-bisphosphate carboxylase gene cloned from a chemoautotrophic bacterial endosymbiont.</title>
        <authorList>
            <person name="Stein J.L."/>
            <person name="Haygood M."/>
            <person name="Felbeck H."/>
        </authorList>
    </citation>
    <scope>NUCLEOTIDE SEQUENCE [GENOMIC DNA]</scope>
</reference>
<keyword id="KW-0113">Calvin cycle</keyword>
<keyword id="KW-0120">Carbon dioxide fixation</keyword>
<feature type="chain" id="PRO_0000198609" description="Ribulose bisphosphate carboxylase small subunit">
    <location>
        <begin position="1"/>
        <end position="121"/>
    </location>
</feature>
<dbReference type="EMBL" id="M34536">
    <property type="protein sequence ID" value="AAA27388.1"/>
    <property type="molecule type" value="Genomic_DNA"/>
</dbReference>
<dbReference type="PIR" id="B38262">
    <property type="entry name" value="RKJVSA"/>
</dbReference>
<dbReference type="SMR" id="P24682"/>
<dbReference type="GO" id="GO:0016984">
    <property type="term" value="F:ribulose-bisphosphate carboxylase activity"/>
    <property type="evidence" value="ECO:0007669"/>
    <property type="project" value="UniProtKB-UniRule"/>
</dbReference>
<dbReference type="GO" id="GO:0019253">
    <property type="term" value="P:reductive pentose-phosphate cycle"/>
    <property type="evidence" value="ECO:0007669"/>
    <property type="project" value="UniProtKB-UniRule"/>
</dbReference>
<dbReference type="CDD" id="cd03527">
    <property type="entry name" value="RuBisCO_small"/>
    <property type="match status" value="1"/>
</dbReference>
<dbReference type="Gene3D" id="3.30.190.10">
    <property type="entry name" value="Ribulose bisphosphate carboxylase, small subunit"/>
    <property type="match status" value="1"/>
</dbReference>
<dbReference type="HAMAP" id="MF_00859">
    <property type="entry name" value="RuBisCO_S_bact"/>
    <property type="match status" value="1"/>
</dbReference>
<dbReference type="InterPro" id="IPR024681">
    <property type="entry name" value="RuBisCO_ssu"/>
</dbReference>
<dbReference type="InterPro" id="IPR000894">
    <property type="entry name" value="RuBisCO_ssu_dom"/>
</dbReference>
<dbReference type="InterPro" id="IPR036385">
    <property type="entry name" value="RuBisCO_ssu_sf"/>
</dbReference>
<dbReference type="PANTHER" id="PTHR31262">
    <property type="entry name" value="RIBULOSE BISPHOSPHATE CARBOXYLASE SMALL CHAIN 1, CHLOROPLASTIC"/>
    <property type="match status" value="1"/>
</dbReference>
<dbReference type="Pfam" id="PF00101">
    <property type="entry name" value="RuBisCO_small"/>
    <property type="match status" value="1"/>
</dbReference>
<dbReference type="SMART" id="SM00961">
    <property type="entry name" value="RuBisCO_small"/>
    <property type="match status" value="1"/>
</dbReference>
<dbReference type="SUPFAM" id="SSF55239">
    <property type="entry name" value="RuBisCO, small subunit"/>
    <property type="match status" value="1"/>
</dbReference>
<protein>
    <recommendedName>
        <fullName evidence="1">Ribulose bisphosphate carboxylase small subunit</fullName>
        <shortName evidence="1">RuBisCO small subunit</shortName>
    </recommendedName>
</protein>
<accession>P24682</accession>
<organism>
    <name type="scientific">Alvinoconcha hessleri symbiotic bacterium</name>
    <dbReference type="NCBI Taxonomy" id="2326"/>
    <lineage>
        <taxon>Bacteria</taxon>
        <taxon>Pseudomonadati</taxon>
        <taxon>Pseudomonadota</taxon>
        <taxon>Gammaproteobacteria</taxon>
        <taxon>sulfur-oxidizing symbionts</taxon>
    </lineage>
</organism>
<sequence>MSEIQDYNSSVSDPSSRKFETFSYLPELGVEKIRKQVEYIVSKGWNPAVEHTEPENAFDHYWYMWKLPMFGETDVDAILAEAEACHKAHPSHHVRLIGYDNYAQSQGTAMVIFRGPISAKC</sequence>
<proteinExistence type="inferred from homology"/>
<gene>
    <name evidence="1" type="primary">cbbS</name>
    <name type="synonym">rbcS</name>
</gene>
<evidence type="ECO:0000255" key="1">
    <source>
        <dbReference type="HAMAP-Rule" id="MF_00859"/>
    </source>
</evidence>
<comment type="function">
    <text evidence="1">RuBisCO catalyzes two reactions: the carboxylation of D-ribulose 1,5-bisphosphate, the primary event in carbon dioxide fixation, as well as the oxidative fragmentation of the pentose substrate. Both reactions occur simultaneously and in competition at the same active site. Although the small subunit is not catalytic it is essential for maximal activity.</text>
</comment>
<comment type="subunit">
    <text evidence="1">Heterohexadecamer of 8 large and 8 small subunits.</text>
</comment>
<comment type="miscellaneous">
    <text evidence="1">The basic functional RuBisCO is composed of a large chain homodimer in a 'head-to-tail' conformation. In form I RuBisCO this homodimer is arranged in a barrel-like tetramer with the small subunits forming a tetrameric 'cap' on each end of the 'barrel'.</text>
</comment>
<comment type="similarity">
    <text evidence="1">Belongs to the RuBisCO small chain family.</text>
</comment>
<name>RBS_ALVHS</name>